<organism>
    <name type="scientific">Xenopus laevis</name>
    <name type="common">African clawed frog</name>
    <dbReference type="NCBI Taxonomy" id="8355"/>
    <lineage>
        <taxon>Eukaryota</taxon>
        <taxon>Metazoa</taxon>
        <taxon>Chordata</taxon>
        <taxon>Craniata</taxon>
        <taxon>Vertebrata</taxon>
        <taxon>Euteleostomi</taxon>
        <taxon>Amphibia</taxon>
        <taxon>Batrachia</taxon>
        <taxon>Anura</taxon>
        <taxon>Pipoidea</taxon>
        <taxon>Pipidae</taxon>
        <taxon>Xenopodinae</taxon>
        <taxon>Xenopus</taxon>
        <taxon>Xenopus</taxon>
    </lineage>
</organism>
<accession>P20715</accession>
<evidence type="ECO:0000250" key="1">
    <source>
        <dbReference type="UniProtKB" id="P00347"/>
    </source>
</evidence>
<evidence type="ECO:0000250" key="2">
    <source>
        <dbReference type="UniProtKB" id="P04035"/>
    </source>
</evidence>
<evidence type="ECO:0000255" key="3"/>
<evidence type="ECO:0000255" key="4">
    <source>
        <dbReference type="PROSITE-ProRule" id="PRU10003"/>
    </source>
</evidence>
<evidence type="ECO:0000256" key="5">
    <source>
        <dbReference type="SAM" id="MobiDB-lite"/>
    </source>
</evidence>
<evidence type="ECO:0000269" key="6">
    <source>
    </source>
</evidence>
<evidence type="ECO:0000305" key="7"/>
<comment type="function">
    <text evidence="2">Catalyzes the conversion of (3S)-hydroxy-3-methylglutaryl-CoA (HMG-CoA) to mevalonic acid, the rate-limiting step in the synthesis of cholesterol and other isoprenoids, thus plays a critical role in cellular cholesterol homeostasis.</text>
</comment>
<comment type="catalytic activity">
    <reaction evidence="2">
        <text>(R)-mevalonate + 2 NADP(+) + CoA = (3S)-3-hydroxy-3-methylglutaryl-CoA + 2 NADPH + 2 H(+)</text>
        <dbReference type="Rhea" id="RHEA:15989"/>
        <dbReference type="ChEBI" id="CHEBI:15378"/>
        <dbReference type="ChEBI" id="CHEBI:36464"/>
        <dbReference type="ChEBI" id="CHEBI:43074"/>
        <dbReference type="ChEBI" id="CHEBI:57287"/>
        <dbReference type="ChEBI" id="CHEBI:57783"/>
        <dbReference type="ChEBI" id="CHEBI:58349"/>
        <dbReference type="EC" id="1.1.1.34"/>
    </reaction>
    <physiologicalReaction direction="right-to-left" evidence="2">
        <dbReference type="Rhea" id="RHEA:15991"/>
    </physiologicalReaction>
</comment>
<comment type="pathway">
    <text>Metabolic intermediate biosynthesis; (R)-mevalonate biosynthesis; (R)-mevalonate from acetyl-CoA: step 3/3.</text>
</comment>
<comment type="subunit">
    <text evidence="2">Homotetramer. Homodimer.</text>
</comment>
<comment type="subcellular location">
    <subcellularLocation>
        <location evidence="2">Endoplasmic reticulum membrane</location>
        <topology evidence="1">Multi-pass membrane protein</topology>
    </subcellularLocation>
    <subcellularLocation>
        <location evidence="2">Peroxisome membrane</location>
        <topology evidence="1">Multi-pass membrane protein</topology>
    </subcellularLocation>
</comment>
<comment type="induction">
    <text evidence="6">By estrogen; in male liver.</text>
</comment>
<comment type="similarity">
    <text evidence="7">Belongs to the HMG-CoA reductase family.</text>
</comment>
<proteinExistence type="evidence at transcript level"/>
<protein>
    <recommendedName>
        <fullName>3-hydroxy-3-methylglutaryl-coenzyme A reductase</fullName>
        <shortName>HMG-CoA reductase</shortName>
        <ecNumber evidence="2">1.1.1.34</ecNumber>
    </recommendedName>
</protein>
<feature type="chain" id="PRO_0000114426" description="3-hydroxy-3-methylglutaryl-coenzyme A reductase">
    <location>
        <begin position="1"/>
        <end position="883"/>
    </location>
</feature>
<feature type="topological domain" description="Cytoplasmic" evidence="1">
    <location>
        <begin position="1"/>
        <end position="9"/>
    </location>
</feature>
<feature type="transmembrane region" description="Helical" evidence="1">
    <location>
        <begin position="10"/>
        <end position="39"/>
    </location>
</feature>
<feature type="topological domain" description="Lumenal" evidence="1">
    <location>
        <begin position="40"/>
        <end position="56"/>
    </location>
</feature>
<feature type="transmembrane region" description="Helical" evidence="1">
    <location>
        <begin position="57"/>
        <end position="78"/>
    </location>
</feature>
<feature type="topological domain" description="Cytoplasmic" evidence="1">
    <location>
        <begin position="79"/>
        <end position="89"/>
    </location>
</feature>
<feature type="transmembrane region" description="Helical" evidence="1">
    <location>
        <begin position="90"/>
        <end position="114"/>
    </location>
</feature>
<feature type="topological domain" description="Lumenal" evidence="1">
    <location>
        <begin position="115"/>
        <end position="123"/>
    </location>
</feature>
<feature type="transmembrane region" description="Helical" evidence="1">
    <location>
        <begin position="124"/>
        <end position="149"/>
    </location>
</feature>
<feature type="topological domain" description="Cytoplasmic" evidence="1">
    <location>
        <begin position="150"/>
        <end position="159"/>
    </location>
</feature>
<feature type="transmembrane region" description="Helical" evidence="1">
    <location>
        <begin position="160"/>
        <end position="187"/>
    </location>
</feature>
<feature type="topological domain" description="Lumenal" evidence="1">
    <location>
        <begin position="188"/>
        <end position="191"/>
    </location>
</feature>
<feature type="transmembrane region" description="Helical" evidence="1">
    <location>
        <begin position="192"/>
        <end position="220"/>
    </location>
</feature>
<feature type="topological domain" description="Cytoplasmic" evidence="1">
    <location>
        <begin position="221"/>
        <end position="249"/>
    </location>
</feature>
<feature type="transmembrane region" description="Helical" evidence="1">
    <location>
        <begin position="250"/>
        <end position="276"/>
    </location>
</feature>
<feature type="topological domain" description="Lumenal" evidence="1">
    <location>
        <begin position="277"/>
        <end position="316"/>
    </location>
</feature>
<feature type="transmembrane region" description="Helical" evidence="1">
    <location>
        <begin position="317"/>
        <end position="341"/>
    </location>
</feature>
<feature type="topological domain" description="Cytoplasmic" evidence="1">
    <location>
        <begin position="342"/>
        <end position="883"/>
    </location>
</feature>
<feature type="region of interest" description="Disordered" evidence="5">
    <location>
        <begin position="373"/>
        <end position="396"/>
    </location>
</feature>
<feature type="active site" description="Charge relay system" evidence="2">
    <location>
        <position position="554"/>
    </location>
</feature>
<feature type="active site" description="Charge relay system" evidence="2">
    <location>
        <position position="686"/>
    </location>
</feature>
<feature type="active site" description="Charge relay system" evidence="2">
    <location>
        <position position="762"/>
    </location>
</feature>
<feature type="active site" description="Proton donor" evidence="4">
    <location>
        <position position="861"/>
    </location>
</feature>
<feature type="glycosylation site" description="N-linked (GlcNAc...) asparagine" evidence="3">
    <location>
        <position position="282"/>
    </location>
</feature>
<sequence>MLSRLFRMHGQFVASHPWEVIVGTVTLTICMMSMNMFTGNDKICGWNYACPKFEEDVLSSDIIILTITRCIAILYIYFQFQNLRQLGSKYILGIAGLFTIFSSFVFSTVVIHFLDKELTGLNEALPFFLLLIDLSKASALAKFALSSNSQDEVRDNIARGMAILGPTFTLEALVECLVIGVGTMSGVRQLEIMCCFGCMSVLANYFAFMTFFPACVSLVLELSRESREGRPIWQLSQFASVLEEEEDNKPNPVTQRVKMIMSLGLVLVHAHSRWISEPSSQNSTSISDHEVTTMLDDMMPKRVEPSMPLWQFYLSRMVTMDVEQIITLGLALLLAVKYIFFEQTETESTFSMKNPIISPVAVQKKQIESCCRREPEQEKTVHVSTTEEASSKEETEAVIKPLPLETSPKAKFIVGDSSPLELSPEDKNTMFDLPEEPRPLDECVRILKNPDKGAQYLTDAEVISLVNAKHIPAYKLETMMESPREGVAIRRQMLSDKLPQRSALQSLPYKNYNYSLVMGACCENVIGYMPIPVGVAGPLLLNNKEYQVPMATTEGCLVASTNRGCRAIMLGGGAKSRVLADGMTRGPVVRLPTACDAAEVKAWLDSAEGFKVIKDAFDSTSRFARLGRLQNCVAGRNLYIRFQSKTGDAMGMNMISKVTEQALARLQEEFPDLHVLAVSGNYCTDKKPAAINWIEGRGKSVVCEAIIPAKVVREVLKSSTEALVEVNINKNFIGSAMAGSIGGYNAHAANIVTAIYIACGQDAAQNVGSSNCITIMEATGPTYEDLYISCTMPSIEIGTVGGGTNLAPQQACLQMLGVQGASTETPGKNACQLAQIVCSTVMAGELSLMAALAAGHLVKSHMVHNRSKINLQDLPGTCTKKAA</sequence>
<gene>
    <name type="primary">hmgcr</name>
</gene>
<dbReference type="EC" id="1.1.1.34" evidence="2"/>
<dbReference type="EMBL" id="M29258">
    <property type="protein sequence ID" value="AAA49740.1"/>
    <property type="molecule type" value="mRNA"/>
</dbReference>
<dbReference type="PIR" id="A35728">
    <property type="entry name" value="A35728"/>
</dbReference>
<dbReference type="RefSeq" id="NP_001081280.1">
    <property type="nucleotide sequence ID" value="NM_001087811.1"/>
</dbReference>
<dbReference type="SMR" id="P20715"/>
<dbReference type="GlyCosmos" id="P20715">
    <property type="glycosylation" value="1 site, No reported glycans"/>
</dbReference>
<dbReference type="DNASU" id="397750"/>
<dbReference type="GeneID" id="397750"/>
<dbReference type="KEGG" id="xla:397750"/>
<dbReference type="AGR" id="Xenbase:XB-GENE-5840728"/>
<dbReference type="CTD" id="397750"/>
<dbReference type="Xenbase" id="XB-GENE-5840728">
    <property type="gene designation" value="hmgcr.L"/>
</dbReference>
<dbReference type="OrthoDB" id="310654at2759"/>
<dbReference type="UniPathway" id="UPA00058">
    <property type="reaction ID" value="UER00103"/>
</dbReference>
<dbReference type="Proteomes" id="UP000186698">
    <property type="component" value="Chromosome 1L"/>
</dbReference>
<dbReference type="Bgee" id="397750">
    <property type="expression patterns" value="Expressed in testis and 19 other cell types or tissues"/>
</dbReference>
<dbReference type="GO" id="GO:0005783">
    <property type="term" value="C:endoplasmic reticulum"/>
    <property type="evidence" value="ECO:0000250"/>
    <property type="project" value="UniProtKB"/>
</dbReference>
<dbReference type="GO" id="GO:0005789">
    <property type="term" value="C:endoplasmic reticulum membrane"/>
    <property type="evidence" value="ECO:0000318"/>
    <property type="project" value="GO_Central"/>
</dbReference>
<dbReference type="GO" id="GO:0005778">
    <property type="term" value="C:peroxisomal membrane"/>
    <property type="evidence" value="ECO:0000250"/>
    <property type="project" value="UniProtKB"/>
</dbReference>
<dbReference type="GO" id="GO:0004420">
    <property type="term" value="F:hydroxymethylglutaryl-CoA reductase (NADPH) activity"/>
    <property type="evidence" value="ECO:0000318"/>
    <property type="project" value="GO_Central"/>
</dbReference>
<dbReference type="GO" id="GO:0050661">
    <property type="term" value="F:NADP binding"/>
    <property type="evidence" value="ECO:0007669"/>
    <property type="project" value="InterPro"/>
</dbReference>
<dbReference type="GO" id="GO:0006695">
    <property type="term" value="P:cholesterol biosynthetic process"/>
    <property type="evidence" value="ECO:0007669"/>
    <property type="project" value="UniProtKB-KW"/>
</dbReference>
<dbReference type="GO" id="GO:0015936">
    <property type="term" value="P:coenzyme A metabolic process"/>
    <property type="evidence" value="ECO:0007669"/>
    <property type="project" value="InterPro"/>
</dbReference>
<dbReference type="GO" id="GO:0008299">
    <property type="term" value="P:isoprenoid biosynthetic process"/>
    <property type="evidence" value="ECO:0000318"/>
    <property type="project" value="GO_Central"/>
</dbReference>
<dbReference type="GO" id="GO:0016126">
    <property type="term" value="P:sterol biosynthetic process"/>
    <property type="evidence" value="ECO:0000318"/>
    <property type="project" value="GO_Central"/>
</dbReference>
<dbReference type="CDD" id="cd00643">
    <property type="entry name" value="HMG-CoA_reductase_classI"/>
    <property type="match status" value="1"/>
</dbReference>
<dbReference type="FunFam" id="1.10.3270.10:FF:000001">
    <property type="entry name" value="3-hydroxy-3-methylglutaryl coenzyme A reductase"/>
    <property type="match status" value="1"/>
</dbReference>
<dbReference type="FunFam" id="3.30.70.420:FF:000001">
    <property type="entry name" value="3-hydroxy-3-methylglutaryl coenzyme A reductase"/>
    <property type="match status" value="1"/>
</dbReference>
<dbReference type="FunFam" id="3.90.770.10:FF:000002">
    <property type="entry name" value="3-hydroxy-3-methylglutaryl coenzyme A reductase"/>
    <property type="match status" value="1"/>
</dbReference>
<dbReference type="Gene3D" id="3.90.770.10">
    <property type="entry name" value="3-hydroxy-3-methylglutaryl-coenzyme A Reductase, Chain A, domain 2"/>
    <property type="match status" value="1"/>
</dbReference>
<dbReference type="Gene3D" id="1.10.3270.10">
    <property type="entry name" value="HMGR, N-terminal domain"/>
    <property type="match status" value="1"/>
</dbReference>
<dbReference type="Gene3D" id="3.30.70.420">
    <property type="entry name" value="Hydroxymethylglutaryl-CoA reductase, class I/II, NAD/NADP-binding domain"/>
    <property type="match status" value="1"/>
</dbReference>
<dbReference type="InterPro" id="IPR002202">
    <property type="entry name" value="HMG_CoA_Rdtase"/>
</dbReference>
<dbReference type="InterPro" id="IPR023074">
    <property type="entry name" value="HMG_CoA_Rdtase_cat_sf"/>
</dbReference>
<dbReference type="InterPro" id="IPR023076">
    <property type="entry name" value="HMG_CoA_Rdtase_CS"/>
</dbReference>
<dbReference type="InterPro" id="IPR004554">
    <property type="entry name" value="HMG_CoA_Rdtase_eu_arc"/>
</dbReference>
<dbReference type="InterPro" id="IPR004816">
    <property type="entry name" value="HMG_CoA_Rdtase_metazoan"/>
</dbReference>
<dbReference type="InterPro" id="IPR023282">
    <property type="entry name" value="HMG_CoA_Rdtase_N"/>
</dbReference>
<dbReference type="InterPro" id="IPR009023">
    <property type="entry name" value="HMG_CoA_Rdtase_NAD(P)-bd_sf"/>
</dbReference>
<dbReference type="InterPro" id="IPR009029">
    <property type="entry name" value="HMG_CoA_Rdtase_sub-bd_dom_sf"/>
</dbReference>
<dbReference type="InterPro" id="IPR053958">
    <property type="entry name" value="HMGCR/SNAP/NPC1-like_SSD"/>
</dbReference>
<dbReference type="InterPro" id="IPR000731">
    <property type="entry name" value="SSD"/>
</dbReference>
<dbReference type="NCBIfam" id="TIGR00920">
    <property type="entry name" value="2A060605"/>
    <property type="match status" value="1"/>
</dbReference>
<dbReference type="NCBIfam" id="TIGR00533">
    <property type="entry name" value="HMG_CoA_R_NADP"/>
    <property type="match status" value="1"/>
</dbReference>
<dbReference type="PANTHER" id="PTHR10572">
    <property type="entry name" value="3-HYDROXY-3-METHYLGLUTARYL-COENZYME A REDUCTASE"/>
    <property type="match status" value="1"/>
</dbReference>
<dbReference type="PANTHER" id="PTHR10572:SF24">
    <property type="entry name" value="3-HYDROXY-3-METHYLGLUTARYL-COENZYME A REDUCTASE"/>
    <property type="match status" value="1"/>
</dbReference>
<dbReference type="Pfam" id="PF00368">
    <property type="entry name" value="HMG-CoA_red"/>
    <property type="match status" value="1"/>
</dbReference>
<dbReference type="Pfam" id="PF12349">
    <property type="entry name" value="Sterol-sensing"/>
    <property type="match status" value="1"/>
</dbReference>
<dbReference type="PRINTS" id="PR00071">
    <property type="entry name" value="HMGCOARDTASE"/>
</dbReference>
<dbReference type="SUPFAM" id="SSF55035">
    <property type="entry name" value="NAD-binding domain of HMG-CoA reductase"/>
    <property type="match status" value="1"/>
</dbReference>
<dbReference type="SUPFAM" id="SSF56542">
    <property type="entry name" value="Substrate-binding domain of HMG-CoA reductase"/>
    <property type="match status" value="1"/>
</dbReference>
<dbReference type="PROSITE" id="PS00066">
    <property type="entry name" value="HMG_COA_REDUCTASE_1"/>
    <property type="match status" value="1"/>
</dbReference>
<dbReference type="PROSITE" id="PS00318">
    <property type="entry name" value="HMG_COA_REDUCTASE_2"/>
    <property type="match status" value="1"/>
</dbReference>
<dbReference type="PROSITE" id="PS01192">
    <property type="entry name" value="HMG_COA_REDUCTASE_3"/>
    <property type="match status" value="1"/>
</dbReference>
<dbReference type="PROSITE" id="PS50065">
    <property type="entry name" value="HMG_COA_REDUCTASE_4"/>
    <property type="match status" value="1"/>
</dbReference>
<dbReference type="PROSITE" id="PS50156">
    <property type="entry name" value="SSD"/>
    <property type="match status" value="1"/>
</dbReference>
<name>HMDH_XENLA</name>
<reference key="1">
    <citation type="journal article" date="1990" name="J. Biol. Chem.">
        <title>Nucleotide sequence and estrogen induction of Xenopus laevis 3-hydroxy-3-methylglutaryl-coenzyme A reductase.</title>
        <authorList>
            <person name="Chen H."/>
            <person name="Shapiro D.J."/>
        </authorList>
    </citation>
    <scope>NUCLEOTIDE SEQUENCE [MRNA]</scope>
    <scope>INDUCTION</scope>
</reference>
<keyword id="KW-0152">Cholesterol biosynthesis</keyword>
<keyword id="KW-0153">Cholesterol metabolism</keyword>
<keyword id="KW-0256">Endoplasmic reticulum</keyword>
<keyword id="KW-0325">Glycoprotein</keyword>
<keyword id="KW-0444">Lipid biosynthesis</keyword>
<keyword id="KW-0443">Lipid metabolism</keyword>
<keyword id="KW-0472">Membrane</keyword>
<keyword id="KW-0521">NADP</keyword>
<keyword id="KW-0560">Oxidoreductase</keyword>
<keyword id="KW-0576">Peroxisome</keyword>
<keyword id="KW-1185">Reference proteome</keyword>
<keyword id="KW-0752">Steroid biosynthesis</keyword>
<keyword id="KW-0753">Steroid metabolism</keyword>
<keyword id="KW-0756">Sterol biosynthesis</keyword>
<keyword id="KW-1207">Sterol metabolism</keyword>
<keyword id="KW-0812">Transmembrane</keyword>
<keyword id="KW-1133">Transmembrane helix</keyword>